<reference key="1">
    <citation type="journal article" date="2006" name="Science">
        <title>The genome of black cottonwood, Populus trichocarpa (Torr. &amp; Gray).</title>
        <authorList>
            <person name="Tuskan G.A."/>
            <person name="Difazio S."/>
            <person name="Jansson S."/>
            <person name="Bohlmann J."/>
            <person name="Grigoriev I."/>
            <person name="Hellsten U."/>
            <person name="Putnam N."/>
            <person name="Ralph S."/>
            <person name="Rombauts S."/>
            <person name="Salamov A."/>
            <person name="Schein J."/>
            <person name="Sterck L."/>
            <person name="Aerts A."/>
            <person name="Bhalerao R.R."/>
            <person name="Bhalerao R.P."/>
            <person name="Blaudez D."/>
            <person name="Boerjan W."/>
            <person name="Brun A."/>
            <person name="Brunner A."/>
            <person name="Busov V."/>
            <person name="Campbell M."/>
            <person name="Carlson J."/>
            <person name="Chalot M."/>
            <person name="Chapman J."/>
            <person name="Chen G.-L."/>
            <person name="Cooper D."/>
            <person name="Coutinho P.M."/>
            <person name="Couturier J."/>
            <person name="Covert S."/>
            <person name="Cronk Q."/>
            <person name="Cunningham R."/>
            <person name="Davis J."/>
            <person name="Degroeve S."/>
            <person name="Dejardin A."/>
            <person name="dePamphilis C.W."/>
            <person name="Detter J."/>
            <person name="Dirks B."/>
            <person name="Dubchak I."/>
            <person name="Duplessis S."/>
            <person name="Ehlting J."/>
            <person name="Ellis B."/>
            <person name="Gendler K."/>
            <person name="Goodstein D."/>
            <person name="Gribskov M."/>
            <person name="Grimwood J."/>
            <person name="Groover A."/>
            <person name="Gunter L."/>
            <person name="Hamberger B."/>
            <person name="Heinze B."/>
            <person name="Helariutta Y."/>
            <person name="Henrissat B."/>
            <person name="Holligan D."/>
            <person name="Holt R."/>
            <person name="Huang W."/>
            <person name="Islam-Faridi N."/>
            <person name="Jones S."/>
            <person name="Jones-Rhoades M."/>
            <person name="Jorgensen R."/>
            <person name="Joshi C."/>
            <person name="Kangasjaervi J."/>
            <person name="Karlsson J."/>
            <person name="Kelleher C."/>
            <person name="Kirkpatrick R."/>
            <person name="Kirst M."/>
            <person name="Kohler A."/>
            <person name="Kalluri U."/>
            <person name="Larimer F."/>
            <person name="Leebens-Mack J."/>
            <person name="Leple J.-C."/>
            <person name="Locascio P."/>
            <person name="Lou Y."/>
            <person name="Lucas S."/>
            <person name="Martin F."/>
            <person name="Montanini B."/>
            <person name="Napoli C."/>
            <person name="Nelson D.R."/>
            <person name="Nelson C."/>
            <person name="Nieminen K."/>
            <person name="Nilsson O."/>
            <person name="Pereda V."/>
            <person name="Peter G."/>
            <person name="Philippe R."/>
            <person name="Pilate G."/>
            <person name="Poliakov A."/>
            <person name="Razumovskaya J."/>
            <person name="Richardson P."/>
            <person name="Rinaldi C."/>
            <person name="Ritland K."/>
            <person name="Rouze P."/>
            <person name="Ryaboy D."/>
            <person name="Schmutz J."/>
            <person name="Schrader J."/>
            <person name="Segerman B."/>
            <person name="Shin H."/>
            <person name="Siddiqui A."/>
            <person name="Sterky F."/>
            <person name="Terry A."/>
            <person name="Tsai C.-J."/>
            <person name="Uberbacher E."/>
            <person name="Unneberg P."/>
            <person name="Vahala J."/>
            <person name="Wall K."/>
            <person name="Wessler S."/>
            <person name="Yang G."/>
            <person name="Yin T."/>
            <person name="Douglas C."/>
            <person name="Marra M."/>
            <person name="Sandberg G."/>
            <person name="Van de Peer Y."/>
            <person name="Rokhsar D.S."/>
        </authorList>
    </citation>
    <scope>NUCLEOTIDE SEQUENCE [LARGE SCALE GENOMIC DNA]</scope>
    <source>
        <strain>cv. Nisqually</strain>
    </source>
</reference>
<reference key="2">
    <citation type="submission" date="2008-12" db="EMBL/GenBank/DDBJ databases">
        <authorList>
            <consortium name="US DOE Joint Genome Institute (JGI-PGF)"/>
            <person name="Grigoriev I.V."/>
            <person name="Terry A."/>
            <person name="Salamov A.A."/>
            <person name="Otillar R."/>
            <person name="Lou Y."/>
            <person name="Lucas S."/>
            <person name="Hammon N."/>
            <person name="Glavina del Rio T."/>
            <person name="Detter J."/>
            <person name="Kalin E."/>
            <person name="Tice H."/>
            <person name="Pitluck S."/>
            <person name="Chapman J."/>
            <person name="Putnam N.H."/>
            <person name="Brunner A."/>
            <person name="Busov V."/>
            <person name="Campbell M."/>
            <person name="Chalot M."/>
            <person name="Covert S."/>
            <person name="Davis J."/>
            <person name="DiFazio S."/>
            <person name="Gribskov M."/>
            <person name="Gunter L."/>
            <person name="Hamberger B."/>
            <person name="Jansson S."/>
            <person name="Joshi C."/>
            <person name="Larimer F."/>
            <person name="Martin F."/>
            <person name="Napoli C."/>
            <person name="Nelson D."/>
            <person name="Ralph S."/>
            <person name="Rombauts S."/>
            <person name="Rouze P."/>
            <person name="Schrader J."/>
            <person name="Tsai C."/>
            <person name="Vahala J."/>
            <person name="Tuskan G."/>
            <person name="Rokhsar D."/>
        </authorList>
    </citation>
    <scope>GENOME REANNOTATION</scope>
    <source>
        <strain>cv. Nisqually</strain>
    </source>
</reference>
<sequence length="994" mass="109537">MGGLKLPPQTLHGIHGGRRPLTAPSSKPSFTIQPNYSSSISTGFTTRNVALFSPSIFPCGYFILGGARERRFGARNTQASVQPVTEELVEDKTKENPVSGDAIRRRFLEFYASRSHKVLPSASLVPDDPTVLLTIAGMLQFKPIFLGKAPRQVPRATTAQKCIRTNDVENVGRTTRHHTFFEMLGNFSFGDYFKKEAIKWAWELSTKEFGLPADRLWVSVYEDDDEAFEIWHDEVGVPVERIKRMGEEDNFWTSGATGPCGPCSELYYDFHPERGYKNTDLGDDSRFIEFYNLVFMQYNKMDDGSLEPLKQKNIDTGLGLERLARILQKVPNNYETDLIYPIIEKAAELANISYALADDRTKMNLKIIGDHLRAIVYLISDGVLPSNIGRGYVVRRLIRRAVRTGRLLGVKGGGEDGVFLPAIAEKVIELSPHIDPDVKARGHSILDELQREELRFVQTLERGEKLLDQMLAEALLNAQKSETLPCLSGKDVFLLYDTFGFPVEITTEVAEEQGVKIDMDGFEVEMENQRRQSQAAHNVVKLAVENGGDLAENVHDTEFLGYDTLSARAVVESLLLNGKSVIQVSEGSEVEVLLNKTPFYAESGGQIGDHGFLYVTQDQSKQTAVVEIKDVQKSLGSVFVHKGTIREGVLEVGREVEAAVDAKLRQRAKVHHTATHLLQSALKKVIGQETSQAGSLVAFDRLRFDFNFHRPLHDSELEEIENLINGWIGDGTLLQTKVMSLTDAKEAGAIAMFGEKYGEQVRVVEVPGVSMELCGGTHVSNTSEIRAFKIISEQGIASGIRRIEAVAGEAFIEYINARDSQMKLLCSTLKVKAEEVTTRVDNLLEELRTVRNEVSALRAKAAVYKASMIASKAFSVGTSKTIRVLVESMDDFDADALKSAAEYLMDTLQDPAAIILGSCPDEGKVSLVAAFTPGVVDIGIQAGKFIGPIAKLCGGGGGGRPNFAQAGGRKPENLTNALEKARTDLILILTEKAN</sequence>
<proteinExistence type="inferred from homology"/>
<feature type="transit peptide" description="Chloroplast and mitochondrion">
    <location>
        <begin position="1"/>
        <end status="unknown"/>
    </location>
</feature>
<feature type="chain" id="PRO_0000402310" description="Alanine--tRNA ligase, chloroplastic/mitochondrial">
    <location>
        <begin status="unknown"/>
        <end position="994"/>
    </location>
</feature>
<feature type="region of interest" description="Disordered" evidence="2">
    <location>
        <begin position="1"/>
        <end position="29"/>
    </location>
</feature>
<feature type="binding site" evidence="1">
    <location>
        <position position="672"/>
    </location>
    <ligand>
        <name>Zn(2+)</name>
        <dbReference type="ChEBI" id="CHEBI:29105"/>
    </ligand>
</feature>
<feature type="binding site" evidence="1">
    <location>
        <position position="676"/>
    </location>
    <ligand>
        <name>Zn(2+)</name>
        <dbReference type="ChEBI" id="CHEBI:29105"/>
    </ligand>
</feature>
<feature type="binding site" evidence="1">
    <location>
        <position position="774"/>
    </location>
    <ligand>
        <name>Zn(2+)</name>
        <dbReference type="ChEBI" id="CHEBI:29105"/>
    </ligand>
</feature>
<feature type="binding site" evidence="1">
    <location>
        <position position="778"/>
    </location>
    <ligand>
        <name>Zn(2+)</name>
        <dbReference type="ChEBI" id="CHEBI:29105"/>
    </ligand>
</feature>
<keyword id="KW-0030">Aminoacyl-tRNA synthetase</keyword>
<keyword id="KW-0067">ATP-binding</keyword>
<keyword id="KW-0150">Chloroplast</keyword>
<keyword id="KW-0436">Ligase</keyword>
<keyword id="KW-0479">Metal-binding</keyword>
<keyword id="KW-0496">Mitochondrion</keyword>
<keyword id="KW-0547">Nucleotide-binding</keyword>
<keyword id="KW-0934">Plastid</keyword>
<keyword id="KW-0648">Protein biosynthesis</keyword>
<keyword id="KW-1185">Reference proteome</keyword>
<keyword id="KW-0694">RNA-binding</keyword>
<keyword id="KW-0809">Transit peptide</keyword>
<keyword id="KW-0820">tRNA-binding</keyword>
<keyword id="KW-0862">Zinc</keyword>
<accession>B9HQZ6</accession>
<organism>
    <name type="scientific">Populus trichocarpa</name>
    <name type="common">Western balsam poplar</name>
    <name type="synonym">Populus balsamifera subsp. trichocarpa</name>
    <dbReference type="NCBI Taxonomy" id="3694"/>
    <lineage>
        <taxon>Eukaryota</taxon>
        <taxon>Viridiplantae</taxon>
        <taxon>Streptophyta</taxon>
        <taxon>Embryophyta</taxon>
        <taxon>Tracheophyta</taxon>
        <taxon>Spermatophyta</taxon>
        <taxon>Magnoliopsida</taxon>
        <taxon>eudicotyledons</taxon>
        <taxon>Gunneridae</taxon>
        <taxon>Pentapetalae</taxon>
        <taxon>rosids</taxon>
        <taxon>fabids</taxon>
        <taxon>Malpighiales</taxon>
        <taxon>Salicaceae</taxon>
        <taxon>Saliceae</taxon>
        <taxon>Populus</taxon>
    </lineage>
</organism>
<name>SYAP_POPTR</name>
<dbReference type="EC" id="6.1.1.7" evidence="1"/>
<dbReference type="EMBL" id="CM009298">
    <property type="protein sequence ID" value="EEE87638.1"/>
    <property type="molecule type" value="Genomic_DNA"/>
</dbReference>
<dbReference type="SMR" id="B9HQZ6"/>
<dbReference type="FunCoup" id="B9HQZ6">
    <property type="interactions" value="1314"/>
</dbReference>
<dbReference type="STRING" id="3694.B9HQZ6"/>
<dbReference type="EnsemblPlants" id="Potri.009G141300.1.v4.1">
    <property type="protein sequence ID" value="Potri.009G141300.1.v4.1"/>
    <property type="gene ID" value="Potri.009G141300.v4.1"/>
</dbReference>
<dbReference type="Gramene" id="Potri.009G141300.1.v4.1">
    <property type="protein sequence ID" value="Potri.009G141300.1.v4.1"/>
    <property type="gene ID" value="Potri.009G141300.v4.1"/>
</dbReference>
<dbReference type="KEGG" id="pop:7472090"/>
<dbReference type="eggNOG" id="KOG0188">
    <property type="taxonomic scope" value="Eukaryota"/>
</dbReference>
<dbReference type="HOGENOM" id="CLU_004485_1_1_1"/>
<dbReference type="InParanoid" id="B9HQZ6"/>
<dbReference type="OrthoDB" id="2423964at2759"/>
<dbReference type="Proteomes" id="UP000006729">
    <property type="component" value="Chromosome 9"/>
</dbReference>
<dbReference type="ExpressionAtlas" id="B9HQZ6">
    <property type="expression patterns" value="baseline and differential"/>
</dbReference>
<dbReference type="GO" id="GO:0009507">
    <property type="term" value="C:chloroplast"/>
    <property type="evidence" value="ECO:0007669"/>
    <property type="project" value="UniProtKB-SubCell"/>
</dbReference>
<dbReference type="GO" id="GO:0005829">
    <property type="term" value="C:cytosol"/>
    <property type="evidence" value="ECO:0000318"/>
    <property type="project" value="GO_Central"/>
</dbReference>
<dbReference type="GO" id="GO:0005739">
    <property type="term" value="C:mitochondrion"/>
    <property type="evidence" value="ECO:0007669"/>
    <property type="project" value="UniProtKB-SubCell"/>
</dbReference>
<dbReference type="GO" id="GO:0004813">
    <property type="term" value="F:alanine-tRNA ligase activity"/>
    <property type="evidence" value="ECO:0000318"/>
    <property type="project" value="GO_Central"/>
</dbReference>
<dbReference type="GO" id="GO:0002161">
    <property type="term" value="F:aminoacyl-tRNA deacylase activity"/>
    <property type="evidence" value="ECO:0000318"/>
    <property type="project" value="GO_Central"/>
</dbReference>
<dbReference type="GO" id="GO:0005524">
    <property type="term" value="F:ATP binding"/>
    <property type="evidence" value="ECO:0007669"/>
    <property type="project" value="UniProtKB-UniRule"/>
</dbReference>
<dbReference type="GO" id="GO:0000049">
    <property type="term" value="F:tRNA binding"/>
    <property type="evidence" value="ECO:0007669"/>
    <property type="project" value="UniProtKB-KW"/>
</dbReference>
<dbReference type="GO" id="GO:0008270">
    <property type="term" value="F:zinc ion binding"/>
    <property type="evidence" value="ECO:0007669"/>
    <property type="project" value="UniProtKB-UniRule"/>
</dbReference>
<dbReference type="GO" id="GO:0006419">
    <property type="term" value="P:alanyl-tRNA aminoacylation"/>
    <property type="evidence" value="ECO:0000318"/>
    <property type="project" value="GO_Central"/>
</dbReference>
<dbReference type="CDD" id="cd00673">
    <property type="entry name" value="AlaRS_core"/>
    <property type="match status" value="1"/>
</dbReference>
<dbReference type="FunFam" id="3.10.310.40:FF:000001">
    <property type="entry name" value="Alanine--tRNA ligase"/>
    <property type="match status" value="1"/>
</dbReference>
<dbReference type="FunFam" id="3.30.54.20:FF:000001">
    <property type="entry name" value="Alanine--tRNA ligase"/>
    <property type="match status" value="1"/>
</dbReference>
<dbReference type="FunFam" id="3.30.930.10:FF:000004">
    <property type="entry name" value="Alanine--tRNA ligase"/>
    <property type="match status" value="1"/>
</dbReference>
<dbReference type="FunFam" id="3.30.980.10:FF:000004">
    <property type="entry name" value="Alanine--tRNA ligase, cytoplasmic"/>
    <property type="match status" value="1"/>
</dbReference>
<dbReference type="FunFam" id="2.40.30.130:FF:000007">
    <property type="entry name" value="Probable alanine--tRNA ligase, chloroplastic"/>
    <property type="match status" value="1"/>
</dbReference>
<dbReference type="Gene3D" id="2.40.30.130">
    <property type="match status" value="1"/>
</dbReference>
<dbReference type="Gene3D" id="3.10.310.40">
    <property type="match status" value="1"/>
</dbReference>
<dbReference type="Gene3D" id="3.30.54.20">
    <property type="match status" value="1"/>
</dbReference>
<dbReference type="Gene3D" id="6.10.250.550">
    <property type="match status" value="1"/>
</dbReference>
<dbReference type="Gene3D" id="3.30.930.10">
    <property type="entry name" value="Bira Bifunctional Protein, Domain 2"/>
    <property type="match status" value="1"/>
</dbReference>
<dbReference type="Gene3D" id="3.30.980.10">
    <property type="entry name" value="Threonyl-trna Synthetase, Chain A, domain 2"/>
    <property type="match status" value="1"/>
</dbReference>
<dbReference type="HAMAP" id="MF_00036_B">
    <property type="entry name" value="Ala_tRNA_synth_B"/>
    <property type="match status" value="1"/>
</dbReference>
<dbReference type="HAMAP" id="MF_03134">
    <property type="entry name" value="Ala_tRNA_synth_plantC"/>
    <property type="match status" value="1"/>
</dbReference>
<dbReference type="InterPro" id="IPR045864">
    <property type="entry name" value="aa-tRNA-synth_II/BPL/LPL"/>
</dbReference>
<dbReference type="InterPro" id="IPR002318">
    <property type="entry name" value="Ala-tRNA-lgiase_IIc"/>
</dbReference>
<dbReference type="InterPro" id="IPR018162">
    <property type="entry name" value="Ala-tRNA-ligase_IIc_anticod-bd"/>
</dbReference>
<dbReference type="InterPro" id="IPR018165">
    <property type="entry name" value="Ala-tRNA-synth_IIc_core"/>
</dbReference>
<dbReference type="InterPro" id="IPR018164">
    <property type="entry name" value="Ala-tRNA-synth_IIc_N"/>
</dbReference>
<dbReference type="InterPro" id="IPR050058">
    <property type="entry name" value="Ala-tRNA_ligase"/>
</dbReference>
<dbReference type="InterPro" id="IPR023033">
    <property type="entry name" value="Ala_tRNA_ligase_euk/bac"/>
</dbReference>
<dbReference type="InterPro" id="IPR027522">
    <property type="entry name" value="Ala_tRNA_synth_plant"/>
</dbReference>
<dbReference type="InterPro" id="IPR003156">
    <property type="entry name" value="DHHA1_dom"/>
</dbReference>
<dbReference type="InterPro" id="IPR018163">
    <property type="entry name" value="Thr/Ala-tRNA-synth_IIc_edit"/>
</dbReference>
<dbReference type="InterPro" id="IPR009000">
    <property type="entry name" value="Transl_B-barrel_sf"/>
</dbReference>
<dbReference type="InterPro" id="IPR012947">
    <property type="entry name" value="tRNA_SAD"/>
</dbReference>
<dbReference type="NCBIfam" id="TIGR00344">
    <property type="entry name" value="alaS"/>
    <property type="match status" value="1"/>
</dbReference>
<dbReference type="PANTHER" id="PTHR11777:SF9">
    <property type="entry name" value="ALANINE--TRNA LIGASE, CYTOPLASMIC"/>
    <property type="match status" value="1"/>
</dbReference>
<dbReference type="PANTHER" id="PTHR11777">
    <property type="entry name" value="ALANYL-TRNA SYNTHETASE"/>
    <property type="match status" value="1"/>
</dbReference>
<dbReference type="Pfam" id="PF02272">
    <property type="entry name" value="DHHA1"/>
    <property type="match status" value="1"/>
</dbReference>
<dbReference type="Pfam" id="PF01411">
    <property type="entry name" value="tRNA-synt_2c"/>
    <property type="match status" value="1"/>
</dbReference>
<dbReference type="Pfam" id="PF07973">
    <property type="entry name" value="tRNA_SAD"/>
    <property type="match status" value="1"/>
</dbReference>
<dbReference type="PRINTS" id="PR00980">
    <property type="entry name" value="TRNASYNTHALA"/>
</dbReference>
<dbReference type="SMART" id="SM00863">
    <property type="entry name" value="tRNA_SAD"/>
    <property type="match status" value="1"/>
</dbReference>
<dbReference type="SUPFAM" id="SSF55681">
    <property type="entry name" value="Class II aaRS and biotin synthetases"/>
    <property type="match status" value="1"/>
</dbReference>
<dbReference type="SUPFAM" id="SSF101353">
    <property type="entry name" value="Putative anticodon-binding domain of alanyl-tRNA synthetase (AlaRS)"/>
    <property type="match status" value="1"/>
</dbReference>
<dbReference type="SUPFAM" id="SSF55186">
    <property type="entry name" value="ThrRS/AlaRS common domain"/>
    <property type="match status" value="1"/>
</dbReference>
<dbReference type="SUPFAM" id="SSF50447">
    <property type="entry name" value="Translation proteins"/>
    <property type="match status" value="1"/>
</dbReference>
<dbReference type="PROSITE" id="PS50860">
    <property type="entry name" value="AA_TRNA_LIGASE_II_ALA"/>
    <property type="match status" value="1"/>
</dbReference>
<gene>
    <name type="ORF">POPTRDRAFT_821063</name>
</gene>
<comment type="function">
    <text evidence="1">Catalyzes the attachment of alanine to tRNA(Ala) in a two-step reaction: alanine is first activated by ATP to form Ala-AMP and then transferred to the acceptor end of tRNA(Ala). Also edits incorrectly charged tRNA(Ala) via its editing domain.</text>
</comment>
<comment type="catalytic activity">
    <reaction evidence="1">
        <text>tRNA(Ala) + L-alanine + ATP = L-alanyl-tRNA(Ala) + AMP + diphosphate</text>
        <dbReference type="Rhea" id="RHEA:12540"/>
        <dbReference type="Rhea" id="RHEA-COMP:9657"/>
        <dbReference type="Rhea" id="RHEA-COMP:9923"/>
        <dbReference type="ChEBI" id="CHEBI:30616"/>
        <dbReference type="ChEBI" id="CHEBI:33019"/>
        <dbReference type="ChEBI" id="CHEBI:57972"/>
        <dbReference type="ChEBI" id="CHEBI:78442"/>
        <dbReference type="ChEBI" id="CHEBI:78497"/>
        <dbReference type="ChEBI" id="CHEBI:456215"/>
        <dbReference type="EC" id="6.1.1.7"/>
    </reaction>
</comment>
<comment type="cofactor">
    <cofactor evidence="1">
        <name>Zn(2+)</name>
        <dbReference type="ChEBI" id="CHEBI:29105"/>
    </cofactor>
    <text evidence="1">Binds 1 zinc ion per subunit.</text>
</comment>
<comment type="subunit">
    <text evidence="1">Monomer.</text>
</comment>
<comment type="subcellular location">
    <subcellularLocation>
        <location evidence="1">Plastid</location>
        <location evidence="1">Chloroplast</location>
    </subcellularLocation>
    <subcellularLocation>
        <location evidence="1">Mitochondrion</location>
    </subcellularLocation>
</comment>
<comment type="domain">
    <text evidence="1">Consists of three domains; the N-terminal catalytic domain, the editing domain and the C-terminal C-Ala domain. The editing domain removes incorrectly charged amino acids, while the C-Ala domain, along with tRNA(Ala), serves as a bridge to cooperatively bring together the editing and aminoacylation centers thus stimulating deacylation of misacylated tRNAs.</text>
</comment>
<comment type="similarity">
    <text evidence="1">Belongs to the class-II aminoacyl-tRNA synthetase family.</text>
</comment>
<protein>
    <recommendedName>
        <fullName evidence="1">Alanine--tRNA ligase, chloroplastic/mitochondrial</fullName>
        <ecNumber evidence="1">6.1.1.7</ecNumber>
    </recommendedName>
    <alternativeName>
        <fullName evidence="1">Alanyl-tRNA synthetase</fullName>
        <shortName evidence="1">AlaRS</shortName>
    </alternativeName>
</protein>
<evidence type="ECO:0000255" key="1">
    <source>
        <dbReference type="HAMAP-Rule" id="MF_03134"/>
    </source>
</evidence>
<evidence type="ECO:0000256" key="2">
    <source>
        <dbReference type="SAM" id="MobiDB-lite"/>
    </source>
</evidence>